<sequence>MIRISDAAQAHFAKLLANQEEGTQIRVFVINPGTPNAECGVSYCPPDAVEATDTALKFDLLTAYVDELSAPYLEDAEIDFVTDQLGSQLTLKAPNAKMRKVADDAPLMERVEYALQSQINPQLAGHGGRVSLMEITDEGYAILQFGGGCNGCSMVDVTLKEGIEKQLLNEFPELKGVRDLTEHQRGEHSYY</sequence>
<accession>B4TKT8</accession>
<feature type="chain" id="PRO_1000186774" description="Fe/S biogenesis protein NfuA">
    <location>
        <begin position="1"/>
        <end position="191"/>
    </location>
</feature>
<feature type="binding site" evidence="1">
    <location>
        <position position="149"/>
    </location>
    <ligand>
        <name>[4Fe-4S] cluster</name>
        <dbReference type="ChEBI" id="CHEBI:49883"/>
    </ligand>
</feature>
<feature type="binding site" evidence="1">
    <location>
        <position position="152"/>
    </location>
    <ligand>
        <name>[4Fe-4S] cluster</name>
        <dbReference type="ChEBI" id="CHEBI:49883"/>
    </ligand>
</feature>
<dbReference type="EMBL" id="CP001120">
    <property type="protein sequence ID" value="ACF66533.1"/>
    <property type="molecule type" value="Genomic_DNA"/>
</dbReference>
<dbReference type="RefSeq" id="WP_000619387.1">
    <property type="nucleotide sequence ID" value="NC_011083.1"/>
</dbReference>
<dbReference type="SMR" id="B4TKT8"/>
<dbReference type="GeneID" id="66757844"/>
<dbReference type="KEGG" id="seh:SeHA_C3819"/>
<dbReference type="HOGENOM" id="CLU_094569_0_0_6"/>
<dbReference type="Proteomes" id="UP000001866">
    <property type="component" value="Chromosome"/>
</dbReference>
<dbReference type="GO" id="GO:0051539">
    <property type="term" value="F:4 iron, 4 sulfur cluster binding"/>
    <property type="evidence" value="ECO:0007669"/>
    <property type="project" value="UniProtKB-UniRule"/>
</dbReference>
<dbReference type="GO" id="GO:0005506">
    <property type="term" value="F:iron ion binding"/>
    <property type="evidence" value="ECO:0007669"/>
    <property type="project" value="InterPro"/>
</dbReference>
<dbReference type="GO" id="GO:0016226">
    <property type="term" value="P:iron-sulfur cluster assembly"/>
    <property type="evidence" value="ECO:0007669"/>
    <property type="project" value="UniProtKB-UniRule"/>
</dbReference>
<dbReference type="GO" id="GO:0051604">
    <property type="term" value="P:protein maturation"/>
    <property type="evidence" value="ECO:0007669"/>
    <property type="project" value="UniProtKB-UniRule"/>
</dbReference>
<dbReference type="FunFam" id="2.60.300.12:FF:000004">
    <property type="entry name" value="Fe/S biogenesis protein NfuA"/>
    <property type="match status" value="1"/>
</dbReference>
<dbReference type="FunFam" id="3.30.300.130:FF:000002">
    <property type="entry name" value="Fe/S biogenesis protein NfuA"/>
    <property type="match status" value="1"/>
</dbReference>
<dbReference type="Gene3D" id="3.30.300.130">
    <property type="entry name" value="Fe-S cluster assembly (FSCA)"/>
    <property type="match status" value="1"/>
</dbReference>
<dbReference type="Gene3D" id="2.60.300.12">
    <property type="entry name" value="HesB-like domain"/>
    <property type="match status" value="1"/>
</dbReference>
<dbReference type="HAMAP" id="MF_01637">
    <property type="entry name" value="Fe_S_biogen_NfuA"/>
    <property type="match status" value="1"/>
</dbReference>
<dbReference type="InterPro" id="IPR017726">
    <property type="entry name" value="Fe/S_biogenesis_protein_NfuA"/>
</dbReference>
<dbReference type="InterPro" id="IPR000361">
    <property type="entry name" value="FeS_biogenesis"/>
</dbReference>
<dbReference type="InterPro" id="IPR034904">
    <property type="entry name" value="FSCA_dom_sf"/>
</dbReference>
<dbReference type="InterPro" id="IPR035903">
    <property type="entry name" value="HesB-like_dom_sf"/>
</dbReference>
<dbReference type="InterPro" id="IPR001075">
    <property type="entry name" value="NIF_FeS_clus_asmbl_NifU_C"/>
</dbReference>
<dbReference type="NCBIfam" id="NF008392">
    <property type="entry name" value="PRK11190.1"/>
    <property type="match status" value="1"/>
</dbReference>
<dbReference type="NCBIfam" id="TIGR03341">
    <property type="entry name" value="YhgI_GntY"/>
    <property type="match status" value="1"/>
</dbReference>
<dbReference type="PANTHER" id="PTHR11178:SF51">
    <property type="entry name" value="FE_S BIOGENESIS PROTEIN NFUA"/>
    <property type="match status" value="1"/>
</dbReference>
<dbReference type="PANTHER" id="PTHR11178">
    <property type="entry name" value="IRON-SULFUR CLUSTER SCAFFOLD PROTEIN NFU-RELATED"/>
    <property type="match status" value="1"/>
</dbReference>
<dbReference type="Pfam" id="PF01521">
    <property type="entry name" value="Fe-S_biosyn"/>
    <property type="match status" value="1"/>
</dbReference>
<dbReference type="Pfam" id="PF01106">
    <property type="entry name" value="NifU"/>
    <property type="match status" value="1"/>
</dbReference>
<dbReference type="SUPFAM" id="SSF117916">
    <property type="entry name" value="Fe-S cluster assembly (FSCA) domain-like"/>
    <property type="match status" value="1"/>
</dbReference>
<dbReference type="SUPFAM" id="SSF89360">
    <property type="entry name" value="HesB-like domain"/>
    <property type="match status" value="1"/>
</dbReference>
<reference key="1">
    <citation type="journal article" date="2011" name="J. Bacteriol.">
        <title>Comparative genomics of 28 Salmonella enterica isolates: evidence for CRISPR-mediated adaptive sublineage evolution.</title>
        <authorList>
            <person name="Fricke W.F."/>
            <person name="Mammel M.K."/>
            <person name="McDermott P.F."/>
            <person name="Tartera C."/>
            <person name="White D.G."/>
            <person name="Leclerc J.E."/>
            <person name="Ravel J."/>
            <person name="Cebula T.A."/>
        </authorList>
    </citation>
    <scope>NUCLEOTIDE SEQUENCE [LARGE SCALE GENOMIC DNA]</scope>
    <source>
        <strain>SL476</strain>
    </source>
</reference>
<comment type="function">
    <text evidence="1">Involved in iron-sulfur cluster biogenesis. Binds a 4Fe-4S cluster, can transfer this cluster to apoproteins, and thereby intervenes in the maturation of Fe/S proteins. Could also act as a scaffold/chaperone for damaged Fe/S proteins.</text>
</comment>
<comment type="cofactor">
    <cofactor evidence="1">
        <name>[4Fe-4S] cluster</name>
        <dbReference type="ChEBI" id="CHEBI:49883"/>
    </cofactor>
    <text evidence="1">Binds 1 [4Fe-4S] cluster per subunit. The cluster is presumably bound at the interface of two monomers.</text>
</comment>
<comment type="subunit">
    <text evidence="1">Homodimer.</text>
</comment>
<comment type="similarity">
    <text evidence="1">Belongs to the NfuA family.</text>
</comment>
<organism>
    <name type="scientific">Salmonella heidelberg (strain SL476)</name>
    <dbReference type="NCBI Taxonomy" id="454169"/>
    <lineage>
        <taxon>Bacteria</taxon>
        <taxon>Pseudomonadati</taxon>
        <taxon>Pseudomonadota</taxon>
        <taxon>Gammaproteobacteria</taxon>
        <taxon>Enterobacterales</taxon>
        <taxon>Enterobacteriaceae</taxon>
        <taxon>Salmonella</taxon>
    </lineage>
</organism>
<gene>
    <name evidence="1" type="primary">nfuA</name>
    <name type="ordered locus">SeHA_C3819</name>
</gene>
<keyword id="KW-0004">4Fe-4S</keyword>
<keyword id="KW-0408">Iron</keyword>
<keyword id="KW-0411">Iron-sulfur</keyword>
<keyword id="KW-0479">Metal-binding</keyword>
<name>NFUA_SALHS</name>
<protein>
    <recommendedName>
        <fullName evidence="1">Fe/S biogenesis protein NfuA</fullName>
    </recommendedName>
</protein>
<evidence type="ECO:0000255" key="1">
    <source>
        <dbReference type="HAMAP-Rule" id="MF_01637"/>
    </source>
</evidence>
<proteinExistence type="inferred from homology"/>